<feature type="chain" id="PRO_1000098506" description="1-deoxy-D-xylulose 5-phosphate reductoisomerase">
    <location>
        <begin position="1"/>
        <end position="407"/>
    </location>
</feature>
<feature type="binding site" evidence="1">
    <location>
        <position position="25"/>
    </location>
    <ligand>
        <name>NADPH</name>
        <dbReference type="ChEBI" id="CHEBI:57783"/>
    </ligand>
</feature>
<feature type="binding site" evidence="1">
    <location>
        <position position="26"/>
    </location>
    <ligand>
        <name>NADPH</name>
        <dbReference type="ChEBI" id="CHEBI:57783"/>
    </ligand>
</feature>
<feature type="binding site" evidence="1">
    <location>
        <position position="27"/>
    </location>
    <ligand>
        <name>NADPH</name>
        <dbReference type="ChEBI" id="CHEBI:57783"/>
    </ligand>
</feature>
<feature type="binding site" evidence="1">
    <location>
        <position position="28"/>
    </location>
    <ligand>
        <name>NADPH</name>
        <dbReference type="ChEBI" id="CHEBI:57783"/>
    </ligand>
</feature>
<feature type="binding site" evidence="1">
    <location>
        <position position="53"/>
    </location>
    <ligand>
        <name>NADPH</name>
        <dbReference type="ChEBI" id="CHEBI:57783"/>
    </ligand>
</feature>
<feature type="binding site" evidence="1">
    <location>
        <position position="136"/>
    </location>
    <ligand>
        <name>NADPH</name>
        <dbReference type="ChEBI" id="CHEBI:57783"/>
    </ligand>
</feature>
<feature type="binding site" evidence="1">
    <location>
        <position position="137"/>
    </location>
    <ligand>
        <name>1-deoxy-D-xylulose 5-phosphate</name>
        <dbReference type="ChEBI" id="CHEBI:57792"/>
    </ligand>
</feature>
<feature type="binding site" evidence="1">
    <location>
        <position position="138"/>
    </location>
    <ligand>
        <name>NADPH</name>
        <dbReference type="ChEBI" id="CHEBI:57783"/>
    </ligand>
</feature>
<feature type="binding site" evidence="1">
    <location>
        <position position="162"/>
    </location>
    <ligand>
        <name>Mn(2+)</name>
        <dbReference type="ChEBI" id="CHEBI:29035"/>
    </ligand>
</feature>
<feature type="binding site" evidence="1">
    <location>
        <position position="163"/>
    </location>
    <ligand>
        <name>1-deoxy-D-xylulose 5-phosphate</name>
        <dbReference type="ChEBI" id="CHEBI:57792"/>
    </ligand>
</feature>
<feature type="binding site" evidence="1">
    <location>
        <position position="164"/>
    </location>
    <ligand>
        <name>1-deoxy-D-xylulose 5-phosphate</name>
        <dbReference type="ChEBI" id="CHEBI:57792"/>
    </ligand>
</feature>
<feature type="binding site" evidence="1">
    <location>
        <position position="164"/>
    </location>
    <ligand>
        <name>Mn(2+)</name>
        <dbReference type="ChEBI" id="CHEBI:29035"/>
    </ligand>
</feature>
<feature type="binding site" evidence="1">
    <location>
        <position position="188"/>
    </location>
    <ligand>
        <name>1-deoxy-D-xylulose 5-phosphate</name>
        <dbReference type="ChEBI" id="CHEBI:57792"/>
    </ligand>
</feature>
<feature type="binding site" evidence="1">
    <location>
        <position position="211"/>
    </location>
    <ligand>
        <name>1-deoxy-D-xylulose 5-phosphate</name>
        <dbReference type="ChEBI" id="CHEBI:57792"/>
    </ligand>
</feature>
<feature type="binding site" evidence="1">
    <location>
        <position position="217"/>
    </location>
    <ligand>
        <name>NADPH</name>
        <dbReference type="ChEBI" id="CHEBI:57783"/>
    </ligand>
</feature>
<feature type="binding site" evidence="1">
    <location>
        <position position="224"/>
    </location>
    <ligand>
        <name>1-deoxy-D-xylulose 5-phosphate</name>
        <dbReference type="ChEBI" id="CHEBI:57792"/>
    </ligand>
</feature>
<feature type="binding site" evidence="1">
    <location>
        <position position="229"/>
    </location>
    <ligand>
        <name>1-deoxy-D-xylulose 5-phosphate</name>
        <dbReference type="ChEBI" id="CHEBI:57792"/>
    </ligand>
</feature>
<feature type="binding site" evidence="1">
    <location>
        <position position="230"/>
    </location>
    <ligand>
        <name>1-deoxy-D-xylulose 5-phosphate</name>
        <dbReference type="ChEBI" id="CHEBI:57792"/>
    </ligand>
</feature>
<feature type="binding site" evidence="1">
    <location>
        <position position="233"/>
    </location>
    <ligand>
        <name>1-deoxy-D-xylulose 5-phosphate</name>
        <dbReference type="ChEBI" id="CHEBI:57792"/>
    </ligand>
</feature>
<feature type="binding site" evidence="1">
    <location>
        <position position="233"/>
    </location>
    <ligand>
        <name>Mn(2+)</name>
        <dbReference type="ChEBI" id="CHEBI:29035"/>
    </ligand>
</feature>
<dbReference type="EC" id="1.1.1.267" evidence="1"/>
<dbReference type="EMBL" id="CP001196">
    <property type="protein sequence ID" value="ACI93082.1"/>
    <property type="molecule type" value="Genomic_DNA"/>
</dbReference>
<dbReference type="EMBL" id="CP002826">
    <property type="protein sequence ID" value="AEI06769.1"/>
    <property type="molecule type" value="Genomic_DNA"/>
</dbReference>
<dbReference type="RefSeq" id="WP_012563109.1">
    <property type="nucleotide sequence ID" value="NC_015684.1"/>
</dbReference>
<dbReference type="SMR" id="B6JH72"/>
<dbReference type="STRING" id="504832.OCA5_c20620"/>
<dbReference type="KEGG" id="oca:OCAR_5961"/>
<dbReference type="KEGG" id="ocg:OCA5_c20620"/>
<dbReference type="PATRIC" id="fig|504832.7.peg.2183"/>
<dbReference type="eggNOG" id="COG0743">
    <property type="taxonomic scope" value="Bacteria"/>
</dbReference>
<dbReference type="HOGENOM" id="CLU_035714_4_0_5"/>
<dbReference type="UniPathway" id="UPA00056">
    <property type="reaction ID" value="UER00092"/>
</dbReference>
<dbReference type="Proteomes" id="UP000007730">
    <property type="component" value="Chromosome"/>
</dbReference>
<dbReference type="GO" id="GO:0030604">
    <property type="term" value="F:1-deoxy-D-xylulose-5-phosphate reductoisomerase activity"/>
    <property type="evidence" value="ECO:0007669"/>
    <property type="project" value="UniProtKB-UniRule"/>
</dbReference>
<dbReference type="GO" id="GO:0030145">
    <property type="term" value="F:manganese ion binding"/>
    <property type="evidence" value="ECO:0007669"/>
    <property type="project" value="TreeGrafter"/>
</dbReference>
<dbReference type="GO" id="GO:0070402">
    <property type="term" value="F:NADPH binding"/>
    <property type="evidence" value="ECO:0007669"/>
    <property type="project" value="InterPro"/>
</dbReference>
<dbReference type="GO" id="GO:0051484">
    <property type="term" value="P:isopentenyl diphosphate biosynthetic process, methylerythritol 4-phosphate pathway involved in terpenoid biosynthetic process"/>
    <property type="evidence" value="ECO:0007669"/>
    <property type="project" value="TreeGrafter"/>
</dbReference>
<dbReference type="FunFam" id="3.40.50.720:FF:000045">
    <property type="entry name" value="1-deoxy-D-xylulose 5-phosphate reductoisomerase"/>
    <property type="match status" value="1"/>
</dbReference>
<dbReference type="Gene3D" id="1.10.1740.10">
    <property type="match status" value="1"/>
</dbReference>
<dbReference type="Gene3D" id="3.40.50.720">
    <property type="entry name" value="NAD(P)-binding Rossmann-like Domain"/>
    <property type="match status" value="1"/>
</dbReference>
<dbReference type="HAMAP" id="MF_00183">
    <property type="entry name" value="DXP_reductoisom"/>
    <property type="match status" value="1"/>
</dbReference>
<dbReference type="InterPro" id="IPR003821">
    <property type="entry name" value="DXP_reductoisomerase"/>
</dbReference>
<dbReference type="InterPro" id="IPR013644">
    <property type="entry name" value="DXP_reductoisomerase_C"/>
</dbReference>
<dbReference type="InterPro" id="IPR013512">
    <property type="entry name" value="DXP_reductoisomerase_N"/>
</dbReference>
<dbReference type="InterPro" id="IPR026877">
    <property type="entry name" value="DXPR_C"/>
</dbReference>
<dbReference type="InterPro" id="IPR036169">
    <property type="entry name" value="DXPR_C_sf"/>
</dbReference>
<dbReference type="InterPro" id="IPR036291">
    <property type="entry name" value="NAD(P)-bd_dom_sf"/>
</dbReference>
<dbReference type="NCBIfam" id="TIGR00243">
    <property type="entry name" value="Dxr"/>
    <property type="match status" value="1"/>
</dbReference>
<dbReference type="PANTHER" id="PTHR30525">
    <property type="entry name" value="1-DEOXY-D-XYLULOSE 5-PHOSPHATE REDUCTOISOMERASE"/>
    <property type="match status" value="1"/>
</dbReference>
<dbReference type="PANTHER" id="PTHR30525:SF0">
    <property type="entry name" value="1-DEOXY-D-XYLULOSE 5-PHOSPHATE REDUCTOISOMERASE, CHLOROPLASTIC"/>
    <property type="match status" value="1"/>
</dbReference>
<dbReference type="Pfam" id="PF08436">
    <property type="entry name" value="DXP_redisom_C"/>
    <property type="match status" value="1"/>
</dbReference>
<dbReference type="Pfam" id="PF02670">
    <property type="entry name" value="DXP_reductoisom"/>
    <property type="match status" value="1"/>
</dbReference>
<dbReference type="Pfam" id="PF13288">
    <property type="entry name" value="DXPR_C"/>
    <property type="match status" value="1"/>
</dbReference>
<dbReference type="PIRSF" id="PIRSF006205">
    <property type="entry name" value="Dxp_reductismrs"/>
    <property type="match status" value="1"/>
</dbReference>
<dbReference type="SUPFAM" id="SSF69055">
    <property type="entry name" value="1-deoxy-D-xylulose-5-phosphate reductoisomerase, C-terminal domain"/>
    <property type="match status" value="1"/>
</dbReference>
<dbReference type="SUPFAM" id="SSF55347">
    <property type="entry name" value="Glyceraldehyde-3-phosphate dehydrogenase-like, C-terminal domain"/>
    <property type="match status" value="1"/>
</dbReference>
<dbReference type="SUPFAM" id="SSF51735">
    <property type="entry name" value="NAD(P)-binding Rossmann-fold domains"/>
    <property type="match status" value="1"/>
</dbReference>
<reference key="1">
    <citation type="journal article" date="2008" name="J. Bacteriol.">
        <title>Genome sequence of the chemolithoautotrophic bacterium Oligotropha carboxidovorans OM5T.</title>
        <authorList>
            <person name="Paul D."/>
            <person name="Bridges S."/>
            <person name="Burgess S.C."/>
            <person name="Dandass Y."/>
            <person name="Lawrence M.L."/>
        </authorList>
    </citation>
    <scope>NUCLEOTIDE SEQUENCE [LARGE SCALE GENOMIC DNA]</scope>
    <source>
        <strain>ATCC 49405 / DSM 1227 / KCTC 32145 / OM5</strain>
    </source>
</reference>
<reference key="2">
    <citation type="journal article" date="2011" name="J. Bacteriol.">
        <title>Complete genome sequences of the chemolithoautotrophic Oligotropha carboxidovorans strains OM4 and OM5.</title>
        <authorList>
            <person name="Volland S."/>
            <person name="Rachinger M."/>
            <person name="Strittmatter A."/>
            <person name="Daniel R."/>
            <person name="Gottschalk G."/>
            <person name="Meyer O."/>
        </authorList>
    </citation>
    <scope>NUCLEOTIDE SEQUENCE [LARGE SCALE GENOMIC DNA]</scope>
    <source>
        <strain>ATCC 49405 / DSM 1227 / KCTC 32145 / OM5</strain>
    </source>
</reference>
<organism>
    <name type="scientific">Afipia carboxidovorans (strain ATCC 49405 / DSM 1227 / KCTC 32145 / OM5)</name>
    <name type="common">Oligotropha carboxidovorans</name>
    <dbReference type="NCBI Taxonomy" id="504832"/>
    <lineage>
        <taxon>Bacteria</taxon>
        <taxon>Pseudomonadati</taxon>
        <taxon>Pseudomonadota</taxon>
        <taxon>Alphaproteobacteria</taxon>
        <taxon>Hyphomicrobiales</taxon>
        <taxon>Nitrobacteraceae</taxon>
        <taxon>Afipia</taxon>
    </lineage>
</organism>
<comment type="function">
    <text evidence="1">Catalyzes the NADPH-dependent rearrangement and reduction of 1-deoxy-D-xylulose-5-phosphate (DXP) to 2-C-methyl-D-erythritol 4-phosphate (MEP).</text>
</comment>
<comment type="catalytic activity">
    <reaction evidence="1">
        <text>2-C-methyl-D-erythritol 4-phosphate + NADP(+) = 1-deoxy-D-xylulose 5-phosphate + NADPH + H(+)</text>
        <dbReference type="Rhea" id="RHEA:13717"/>
        <dbReference type="ChEBI" id="CHEBI:15378"/>
        <dbReference type="ChEBI" id="CHEBI:57783"/>
        <dbReference type="ChEBI" id="CHEBI:57792"/>
        <dbReference type="ChEBI" id="CHEBI:58262"/>
        <dbReference type="ChEBI" id="CHEBI:58349"/>
        <dbReference type="EC" id="1.1.1.267"/>
    </reaction>
    <physiologicalReaction direction="right-to-left" evidence="1">
        <dbReference type="Rhea" id="RHEA:13719"/>
    </physiologicalReaction>
</comment>
<comment type="cofactor">
    <cofactor evidence="1">
        <name>Mg(2+)</name>
        <dbReference type="ChEBI" id="CHEBI:18420"/>
    </cofactor>
    <cofactor evidence="1">
        <name>Mn(2+)</name>
        <dbReference type="ChEBI" id="CHEBI:29035"/>
    </cofactor>
</comment>
<comment type="pathway">
    <text evidence="1">Isoprenoid biosynthesis; isopentenyl diphosphate biosynthesis via DXP pathway; isopentenyl diphosphate from 1-deoxy-D-xylulose 5-phosphate: step 1/6.</text>
</comment>
<comment type="similarity">
    <text evidence="1">Belongs to the DXR family.</text>
</comment>
<keyword id="KW-0414">Isoprene biosynthesis</keyword>
<keyword id="KW-0464">Manganese</keyword>
<keyword id="KW-0479">Metal-binding</keyword>
<keyword id="KW-0521">NADP</keyword>
<keyword id="KW-0560">Oxidoreductase</keyword>
<keyword id="KW-1185">Reference proteome</keyword>
<accession>B6JH72</accession>
<accession>F8BWK1</accession>
<evidence type="ECO:0000255" key="1">
    <source>
        <dbReference type="HAMAP-Rule" id="MF_00183"/>
    </source>
</evidence>
<name>DXR_AFIC5</name>
<proteinExistence type="inferred from homology"/>
<gene>
    <name evidence="1" type="primary">dxr</name>
    <name type="ordered locus">OCAR_5961</name>
    <name type="ordered locus">OCA5_c20620</name>
</gene>
<sequence length="407" mass="42873">MNAVPLRQSEPMPQGERVVTILGATGSIGQSTADLVRRGRGRYRVEALTAHSNVAELAKLARELGARFAAVAKEECYAELKAALAGSGIEVGAGESALVEAALRPANWVMAAMSGAAGLKPAMAAAGRGEIVALANKECLVCAGEAFMRHAAANNATVLPVDSEHNAIFQSLGAGRREDLVRIILTASGGPFRTATREQIENATVEQALKHPNWSMGRKITIDSATMFNKALEIIEAFHLFELKADQIDVLVHPQSIIHGLVEFADRSVVAQMGAPDMRTPIAHCLGWPHRIDGPATQLDLAKLTQLTFEAPDPVRFPALRLVREALVAGGAAPTVLNAANEVAVASFLDRKIPFGGIARLVEATLEALVAKGTAKAPQSADEALAVDHTARKTAAALLPEIALKAS</sequence>
<protein>
    <recommendedName>
        <fullName evidence="1">1-deoxy-D-xylulose 5-phosphate reductoisomerase</fullName>
        <shortName evidence="1">DXP reductoisomerase</shortName>
        <ecNumber evidence="1">1.1.1.267</ecNumber>
    </recommendedName>
    <alternativeName>
        <fullName evidence="1">1-deoxyxylulose-5-phosphate reductoisomerase</fullName>
    </alternativeName>
    <alternativeName>
        <fullName evidence="1">2-C-methyl-D-erythritol 4-phosphate synthase</fullName>
    </alternativeName>
</protein>